<gene>
    <name evidence="1" type="primary">kup2</name>
    <name type="ordered locus">RPE_2012</name>
</gene>
<protein>
    <recommendedName>
        <fullName evidence="1">Probable potassium transport system protein Kup 2</fullName>
    </recommendedName>
</protein>
<keyword id="KW-0997">Cell inner membrane</keyword>
<keyword id="KW-1003">Cell membrane</keyword>
<keyword id="KW-0406">Ion transport</keyword>
<keyword id="KW-0472">Membrane</keyword>
<keyword id="KW-0630">Potassium</keyword>
<keyword id="KW-0633">Potassium transport</keyword>
<keyword id="KW-0769">Symport</keyword>
<keyword id="KW-0812">Transmembrane</keyword>
<keyword id="KW-1133">Transmembrane helix</keyword>
<keyword id="KW-0813">Transport</keyword>
<name>KUP2_RHOP5</name>
<evidence type="ECO:0000255" key="1">
    <source>
        <dbReference type="HAMAP-Rule" id="MF_01522"/>
    </source>
</evidence>
<feature type="chain" id="PRO_0000279825" description="Probable potassium transport system protein Kup 2">
    <location>
        <begin position="1"/>
        <end position="630"/>
    </location>
</feature>
<feature type="transmembrane region" description="Helical" evidence="1">
    <location>
        <begin position="14"/>
        <end position="34"/>
    </location>
</feature>
<feature type="transmembrane region" description="Helical" evidence="1">
    <location>
        <begin position="56"/>
        <end position="76"/>
    </location>
</feature>
<feature type="transmembrane region" description="Helical" evidence="1">
    <location>
        <begin position="108"/>
        <end position="128"/>
    </location>
</feature>
<feature type="transmembrane region" description="Helical" evidence="1">
    <location>
        <begin position="145"/>
        <end position="165"/>
    </location>
</feature>
<feature type="transmembrane region" description="Helical" evidence="1">
    <location>
        <begin position="176"/>
        <end position="196"/>
    </location>
</feature>
<feature type="transmembrane region" description="Helical" evidence="1">
    <location>
        <begin position="214"/>
        <end position="234"/>
    </location>
</feature>
<feature type="transmembrane region" description="Helical" evidence="1">
    <location>
        <begin position="255"/>
        <end position="275"/>
    </location>
</feature>
<feature type="transmembrane region" description="Helical" evidence="1">
    <location>
        <begin position="293"/>
        <end position="313"/>
    </location>
</feature>
<feature type="transmembrane region" description="Helical" evidence="1">
    <location>
        <begin position="352"/>
        <end position="372"/>
    </location>
</feature>
<feature type="transmembrane region" description="Helical" evidence="1">
    <location>
        <begin position="375"/>
        <end position="395"/>
    </location>
</feature>
<feature type="transmembrane region" description="Helical" evidence="1">
    <location>
        <begin position="402"/>
        <end position="422"/>
    </location>
</feature>
<feature type="transmembrane region" description="Helical" evidence="1">
    <location>
        <begin position="427"/>
        <end position="447"/>
    </location>
</feature>
<dbReference type="EMBL" id="CP000463">
    <property type="protein sequence ID" value="ABJ05956.1"/>
    <property type="molecule type" value="Genomic_DNA"/>
</dbReference>
<dbReference type="STRING" id="316055.RPE_2012"/>
<dbReference type="KEGG" id="rpe:RPE_2012"/>
<dbReference type="eggNOG" id="COG3158">
    <property type="taxonomic scope" value="Bacteria"/>
</dbReference>
<dbReference type="HOGENOM" id="CLU_008142_4_2_5"/>
<dbReference type="OrthoDB" id="9805577at2"/>
<dbReference type="GO" id="GO:0005886">
    <property type="term" value="C:plasma membrane"/>
    <property type="evidence" value="ECO:0007669"/>
    <property type="project" value="UniProtKB-SubCell"/>
</dbReference>
<dbReference type="GO" id="GO:0015079">
    <property type="term" value="F:potassium ion transmembrane transporter activity"/>
    <property type="evidence" value="ECO:0007669"/>
    <property type="project" value="UniProtKB-UniRule"/>
</dbReference>
<dbReference type="GO" id="GO:0015293">
    <property type="term" value="F:symporter activity"/>
    <property type="evidence" value="ECO:0007669"/>
    <property type="project" value="UniProtKB-UniRule"/>
</dbReference>
<dbReference type="HAMAP" id="MF_01522">
    <property type="entry name" value="Kup"/>
    <property type="match status" value="1"/>
</dbReference>
<dbReference type="InterPro" id="IPR003855">
    <property type="entry name" value="K+_transporter"/>
</dbReference>
<dbReference type="InterPro" id="IPR053952">
    <property type="entry name" value="K_trans_C"/>
</dbReference>
<dbReference type="InterPro" id="IPR053951">
    <property type="entry name" value="K_trans_N"/>
</dbReference>
<dbReference type="InterPro" id="IPR023051">
    <property type="entry name" value="Kup"/>
</dbReference>
<dbReference type="PANTHER" id="PTHR30540:SF79">
    <property type="entry name" value="LOW AFFINITY POTASSIUM TRANSPORT SYSTEM PROTEIN KUP"/>
    <property type="match status" value="1"/>
</dbReference>
<dbReference type="PANTHER" id="PTHR30540">
    <property type="entry name" value="OSMOTIC STRESS POTASSIUM TRANSPORTER"/>
    <property type="match status" value="1"/>
</dbReference>
<dbReference type="Pfam" id="PF02705">
    <property type="entry name" value="K_trans"/>
    <property type="match status" value="1"/>
</dbReference>
<dbReference type="Pfam" id="PF22776">
    <property type="entry name" value="K_trans_C"/>
    <property type="match status" value="1"/>
</dbReference>
<reference key="1">
    <citation type="submission" date="2006-09" db="EMBL/GenBank/DDBJ databases">
        <title>Complete sequence of Rhodopseudomonas palustris BisA53.</title>
        <authorList>
            <consortium name="US DOE Joint Genome Institute"/>
            <person name="Copeland A."/>
            <person name="Lucas S."/>
            <person name="Lapidus A."/>
            <person name="Barry K."/>
            <person name="Detter J.C."/>
            <person name="Glavina del Rio T."/>
            <person name="Hammon N."/>
            <person name="Israni S."/>
            <person name="Dalin E."/>
            <person name="Tice H."/>
            <person name="Pitluck S."/>
            <person name="Chain P."/>
            <person name="Malfatti S."/>
            <person name="Shin M."/>
            <person name="Vergez L."/>
            <person name="Schmutz J."/>
            <person name="Larimer F."/>
            <person name="Land M."/>
            <person name="Hauser L."/>
            <person name="Pelletier D.A."/>
            <person name="Kyrpides N."/>
            <person name="Kim E."/>
            <person name="Harwood C.S."/>
            <person name="Oda Y."/>
            <person name="Richardson P."/>
        </authorList>
    </citation>
    <scope>NUCLEOTIDE SEQUENCE [LARGE SCALE GENOMIC DNA]</scope>
    <source>
        <strain>BisA53</strain>
    </source>
</reference>
<organism>
    <name type="scientific">Rhodopseudomonas palustris (strain BisA53)</name>
    <dbReference type="NCBI Taxonomy" id="316055"/>
    <lineage>
        <taxon>Bacteria</taxon>
        <taxon>Pseudomonadati</taxon>
        <taxon>Pseudomonadota</taxon>
        <taxon>Alphaproteobacteria</taxon>
        <taxon>Hyphomicrobiales</taxon>
        <taxon>Nitrobacteraceae</taxon>
        <taxon>Rhodopseudomonas</taxon>
    </lineage>
</organism>
<accession>Q07Q28</accession>
<proteinExistence type="inferred from homology"/>
<comment type="function">
    <text evidence="1">Transport of potassium into the cell. Likely operates as a K(+):H(+) symporter.</text>
</comment>
<comment type="catalytic activity">
    <reaction evidence="1">
        <text>K(+)(in) + H(+)(in) = K(+)(out) + H(+)(out)</text>
        <dbReference type="Rhea" id="RHEA:28490"/>
        <dbReference type="ChEBI" id="CHEBI:15378"/>
        <dbReference type="ChEBI" id="CHEBI:29103"/>
    </reaction>
    <physiologicalReaction direction="right-to-left" evidence="1">
        <dbReference type="Rhea" id="RHEA:28492"/>
    </physiologicalReaction>
</comment>
<comment type="subcellular location">
    <subcellularLocation>
        <location evidence="1">Cell inner membrane</location>
        <topology evidence="1">Multi-pass membrane protein</topology>
    </subcellularLocation>
</comment>
<comment type="similarity">
    <text evidence="1">Belongs to the HAK/KUP transporter (TC 2.A.72) family.</text>
</comment>
<sequence length="630" mass="68089">MALSSVEPTEAPRATGFGALTLGSIGVVFGDIGTSPLYAFREAVHVAAEGAPVTRVIVLGVLSLILWSLLIVVTAKYVLLLLRADNNGEGGTLSLMALGQRALGRRSVPLLVLGVIGASMFIGDSMITPAISVLSAVEGLKIAAPALQHYVVPLTVGILVALFAFQRWGTAKVASAFGPVMVLWFSTLAVLGLLHINDDPSVIAAINPWYAVEFMLSHGVIALVTIGAVFLAVTGGEALYADLGHFGRKPIQAGWLFFVLPSLLLNYFGQGAMVLAHPDAVENTFYRMVPENLLVPMILLATAATVIASQAVITGAFSLISQAVQLGLLPRFEVRYTSETHAGQIYLPRVNMLLLAGVLLLVLLFHSSSALAAAYGIAVSTTMVVDGVMGFVVVWKLWGWRPAAAAALIIPFVAVDAIFFSANLLKLMEGAWVPLLFGFLMAMLVWTWRRGSAMLILKTRRTEVPLPDLIRSLEKRPPHIVRGTAVFLTSDPEYVPSALLHNLKHNKVLHEHNVILTIETAQTPRVDLADRVRMESLGDKFARVRLRFGFMESPNVPKALVIARKLGWQFDIMSTSFFVSRRSLKPAAQSGMPRWQNGLFIALSRSANDATDYFQIPTGRVVEVGTQVTI</sequence>